<proteinExistence type="inferred from homology"/>
<reference key="1">
    <citation type="journal article" date="1985" name="Proc. Natl. Acad. Sci. U.S.A.">
        <title>Nucleotide sequence of an unusual regionally expressed silkmoth chorion RNA: predicted primary and secondary structures of an architectural protein.</title>
        <authorList>
            <person name="Regier J.C."/>
            <person name="Pacholski P."/>
        </authorList>
    </citation>
    <scope>NUCLEOTIDE SEQUENCE [GENOMIC DNA]</scope>
</reference>
<name>CHE1_ANTPO</name>
<evidence type="ECO:0000255" key="1"/>
<evidence type="ECO:0000256" key="2">
    <source>
        <dbReference type="SAM" id="MobiDB-lite"/>
    </source>
</evidence>
<accession>P05686</accession>
<comment type="function">
    <text>This protein is one of two components of the prominent 'filler' that helps mold the shape of aeropyle crowns.</text>
</comment>
<sequence length="169" mass="17360">MAWFTTVLIVASLLGSLVAQPITYTLVPTSSIPSQPTTSNERNKSCRLAIEELGALVQLLKELSSDESSGARLSEDVIVKLVNALIYVATYTCKGTGYNTTPLDILCDGVCGVGAGRGAEMEGKPRSGAGKGAEMEGKPKSTESVAETNTVAAGTGVVAEKTGTESSAS</sequence>
<keyword id="KW-0677">Repeat</keyword>
<keyword id="KW-0732">Signal</keyword>
<organism>
    <name type="scientific">Antheraea polyphemus</name>
    <name type="common">Polyphemus moth</name>
    <dbReference type="NCBI Taxonomy" id="7120"/>
    <lineage>
        <taxon>Eukaryota</taxon>
        <taxon>Metazoa</taxon>
        <taxon>Ecdysozoa</taxon>
        <taxon>Arthropoda</taxon>
        <taxon>Hexapoda</taxon>
        <taxon>Insecta</taxon>
        <taxon>Pterygota</taxon>
        <taxon>Neoptera</taxon>
        <taxon>Endopterygota</taxon>
        <taxon>Lepidoptera</taxon>
        <taxon>Glossata</taxon>
        <taxon>Ditrysia</taxon>
        <taxon>Bombycoidea</taxon>
        <taxon>Saturniidae</taxon>
        <taxon>Saturniinae</taxon>
        <taxon>Saturniini</taxon>
        <taxon>Antheraea</taxon>
    </lineage>
</organism>
<feature type="signal peptide" evidence="1">
    <location>
        <begin position="1"/>
        <end position="19"/>
    </location>
</feature>
<feature type="chain" id="PRO_0000005397" description="Chorion protein E1">
    <location>
        <begin position="20"/>
        <end position="169"/>
    </location>
</feature>
<feature type="repeat" description="Tetradecapeptide">
    <location>
        <begin position="114"/>
        <end position="127"/>
    </location>
</feature>
<feature type="repeat" description="Tetradecapeptide">
    <location>
        <begin position="128"/>
        <end position="141"/>
    </location>
</feature>
<feature type="region of interest" description="Disordered" evidence="2">
    <location>
        <begin position="119"/>
        <end position="169"/>
    </location>
</feature>
<feature type="compositionally biased region" description="Polar residues" evidence="2">
    <location>
        <begin position="142"/>
        <end position="152"/>
    </location>
</feature>
<dbReference type="EMBL" id="M10789">
    <property type="protein sequence ID" value="AAB59217.1"/>
    <property type="molecule type" value="Genomic_DNA"/>
</dbReference>
<dbReference type="PIR" id="A25163">
    <property type="entry name" value="EMAOE1"/>
</dbReference>
<protein>
    <recommendedName>
        <fullName>Chorion protein E1</fullName>
    </recommendedName>
</protein>